<organism>
    <name type="scientific">Rickettsia rhipicephali</name>
    <dbReference type="NCBI Taxonomy" id="33992"/>
    <lineage>
        <taxon>Bacteria</taxon>
        <taxon>Pseudomonadati</taxon>
        <taxon>Pseudomonadota</taxon>
        <taxon>Alphaproteobacteria</taxon>
        <taxon>Rickettsiales</taxon>
        <taxon>Rickettsiaceae</taxon>
        <taxon>Rickettsieae</taxon>
        <taxon>Rickettsia</taxon>
        <taxon>spotted fever group</taxon>
    </lineage>
</organism>
<proteinExistence type="inferred from homology"/>
<reference key="1">
    <citation type="journal article" date="2002" name="Mol. Biol. Evol.">
        <title>Proliferation and deterioration of Rickettsia palindromic elements.</title>
        <authorList>
            <person name="Amiri H."/>
            <person name="Alsmark C.M."/>
            <person name="Andersson S.G.E."/>
        </authorList>
    </citation>
    <scope>NUCLEOTIDE SEQUENCE [GENOMIC DNA]</scope>
    <source>
        <strain>3-7-6</strain>
    </source>
</reference>
<name>EFG_RICRH</name>
<comment type="function">
    <text evidence="1">Catalyzes the GTP-dependent ribosomal translocation step during translation elongation. During this step, the ribosome changes from the pre-translocational (PRE) to the post-translocational (POST) state as the newly formed A-site-bound peptidyl-tRNA and P-site-bound deacylated tRNA move to the P and E sites, respectively. Catalyzes the coordinated movement of the two tRNA molecules, the mRNA and conformational changes in the ribosome.</text>
</comment>
<comment type="subcellular location">
    <subcellularLocation>
        <location evidence="1">Cytoplasm</location>
    </subcellularLocation>
</comment>
<comment type="similarity">
    <text evidence="1">Belongs to the TRAFAC class translation factor GTPase superfamily. Classic translation factor GTPase family. EF-G/EF-2 subfamily.</text>
</comment>
<keyword id="KW-0963">Cytoplasm</keyword>
<keyword id="KW-0251">Elongation factor</keyword>
<keyword id="KW-0342">GTP-binding</keyword>
<keyword id="KW-0547">Nucleotide-binding</keyword>
<keyword id="KW-0648">Protein biosynthesis</keyword>
<evidence type="ECO:0000255" key="1">
    <source>
        <dbReference type="HAMAP-Rule" id="MF_00054"/>
    </source>
</evidence>
<feature type="chain" id="PRO_0000091202" description="Elongation factor G">
    <location>
        <begin position="1"/>
        <end position="697"/>
    </location>
</feature>
<feature type="domain" description="tr-type G">
    <location>
        <begin position="8"/>
        <end position="283"/>
    </location>
</feature>
<feature type="binding site" evidence="1">
    <location>
        <begin position="17"/>
        <end position="24"/>
    </location>
    <ligand>
        <name>GTP</name>
        <dbReference type="ChEBI" id="CHEBI:37565"/>
    </ligand>
</feature>
<feature type="binding site" evidence="1">
    <location>
        <begin position="81"/>
        <end position="85"/>
    </location>
    <ligand>
        <name>GTP</name>
        <dbReference type="ChEBI" id="CHEBI:37565"/>
    </ligand>
</feature>
<feature type="binding site" evidence="1">
    <location>
        <begin position="135"/>
        <end position="138"/>
    </location>
    <ligand>
        <name>GTP</name>
        <dbReference type="ChEBI" id="CHEBI:37565"/>
    </ligand>
</feature>
<accession>Q8KTB7</accession>
<sequence length="697" mass="77308">MSKINKLEHIRNIGICAHIDAGKTTTTERILYYTGKSHKIGEVHEGGATMDWMEQEQERGITITSAATTCRWQDKIINIIDTPGHVDFTIEVERSLRVLDGAVAVLDGVAGVEPQSETVWRQADKYNVPRMCFVNKMDRMGADFYRCVEMLKDRLGAKPLVIQLPVGIEENFKGIIDLVKMKVVIWKDEALGAEYFEEDIPADMKDKAEEYHAKLLDMVVELDDHVMEKYLSGEEVTAEEIKRLISKGTISAAFYPVLCGSAFKNKGVQPLLDAVVDFLPSPTDIGIVKGMEVSTGEEKDFPISELEPFAALAFKIMNDPFVGSLTFIRIYSGKITSGTTVINTVKNKREKIGRMLLMHSNNREDVKEASAGDIVALAGLKDTTTGDTLSDIDQQVILEKMEFPEPVIELAVEPKSTADQEKMGLALSRLAAEDPSFRVSTDHETGQTVIKGMGELHLEIIIDRMRREFKVEANIGAPQVAYRETITKACEIDYTHKKQSGGAGQFARVKIIFEPLKDVKDLKDEDKIFVFESKIIGGAVPKEYIPGVEKGLNNIRETGVIAGYPMIDFKATLVDGAFHDVDSSVLAFEIAAKAAFREGMPKGNPKLLEPIMQVEVITPDEYMGDIIGDLNSRRGQIQSMDPRGNAQVVTANVPLAEMFGYVNTLRSLSQGRAQFSMIFSHYDQVPSQVADIIKAKK</sequence>
<protein>
    <recommendedName>
        <fullName evidence="1">Elongation factor G</fullName>
        <shortName evidence="1">EF-G</shortName>
    </recommendedName>
</protein>
<dbReference type="EMBL" id="AF502173">
    <property type="protein sequence ID" value="AAM90919.1"/>
    <property type="molecule type" value="Genomic_DNA"/>
</dbReference>
<dbReference type="SMR" id="Q8KTB7"/>
<dbReference type="GO" id="GO:0005737">
    <property type="term" value="C:cytoplasm"/>
    <property type="evidence" value="ECO:0007669"/>
    <property type="project" value="UniProtKB-SubCell"/>
</dbReference>
<dbReference type="GO" id="GO:0005525">
    <property type="term" value="F:GTP binding"/>
    <property type="evidence" value="ECO:0007669"/>
    <property type="project" value="UniProtKB-UniRule"/>
</dbReference>
<dbReference type="GO" id="GO:0003924">
    <property type="term" value="F:GTPase activity"/>
    <property type="evidence" value="ECO:0007669"/>
    <property type="project" value="InterPro"/>
</dbReference>
<dbReference type="GO" id="GO:0003746">
    <property type="term" value="F:translation elongation factor activity"/>
    <property type="evidence" value="ECO:0007669"/>
    <property type="project" value="UniProtKB-UniRule"/>
</dbReference>
<dbReference type="GO" id="GO:0032790">
    <property type="term" value="P:ribosome disassembly"/>
    <property type="evidence" value="ECO:0007669"/>
    <property type="project" value="TreeGrafter"/>
</dbReference>
<dbReference type="CDD" id="cd01886">
    <property type="entry name" value="EF-G"/>
    <property type="match status" value="1"/>
</dbReference>
<dbReference type="CDD" id="cd16262">
    <property type="entry name" value="EFG_III"/>
    <property type="match status" value="1"/>
</dbReference>
<dbReference type="CDD" id="cd01434">
    <property type="entry name" value="EFG_mtEFG1_IV"/>
    <property type="match status" value="1"/>
</dbReference>
<dbReference type="CDD" id="cd03713">
    <property type="entry name" value="EFG_mtEFG_C"/>
    <property type="match status" value="1"/>
</dbReference>
<dbReference type="CDD" id="cd04088">
    <property type="entry name" value="EFG_mtEFG_II"/>
    <property type="match status" value="1"/>
</dbReference>
<dbReference type="FunFam" id="2.40.30.10:FF:000006">
    <property type="entry name" value="Elongation factor G"/>
    <property type="match status" value="1"/>
</dbReference>
<dbReference type="FunFam" id="3.30.230.10:FF:000003">
    <property type="entry name" value="Elongation factor G"/>
    <property type="match status" value="1"/>
</dbReference>
<dbReference type="FunFam" id="3.30.70.240:FF:000001">
    <property type="entry name" value="Elongation factor G"/>
    <property type="match status" value="1"/>
</dbReference>
<dbReference type="FunFam" id="3.30.70.870:FF:000001">
    <property type="entry name" value="Elongation factor G"/>
    <property type="match status" value="1"/>
</dbReference>
<dbReference type="FunFam" id="3.40.50.300:FF:000029">
    <property type="entry name" value="Elongation factor G"/>
    <property type="match status" value="1"/>
</dbReference>
<dbReference type="Gene3D" id="3.30.230.10">
    <property type="match status" value="1"/>
</dbReference>
<dbReference type="Gene3D" id="3.30.70.240">
    <property type="match status" value="1"/>
</dbReference>
<dbReference type="Gene3D" id="3.30.70.870">
    <property type="entry name" value="Elongation Factor G (Translational Gtpase), domain 3"/>
    <property type="match status" value="1"/>
</dbReference>
<dbReference type="Gene3D" id="3.40.50.300">
    <property type="entry name" value="P-loop containing nucleotide triphosphate hydrolases"/>
    <property type="match status" value="1"/>
</dbReference>
<dbReference type="Gene3D" id="2.40.30.10">
    <property type="entry name" value="Translation factors"/>
    <property type="match status" value="1"/>
</dbReference>
<dbReference type="HAMAP" id="MF_00054_B">
    <property type="entry name" value="EF_G_EF_2_B"/>
    <property type="match status" value="1"/>
</dbReference>
<dbReference type="InterPro" id="IPR053905">
    <property type="entry name" value="EF-G-like_DII"/>
</dbReference>
<dbReference type="InterPro" id="IPR041095">
    <property type="entry name" value="EFG_II"/>
</dbReference>
<dbReference type="InterPro" id="IPR009022">
    <property type="entry name" value="EFG_III"/>
</dbReference>
<dbReference type="InterPro" id="IPR035647">
    <property type="entry name" value="EFG_III/V"/>
</dbReference>
<dbReference type="InterPro" id="IPR047872">
    <property type="entry name" value="EFG_IV"/>
</dbReference>
<dbReference type="InterPro" id="IPR035649">
    <property type="entry name" value="EFG_V"/>
</dbReference>
<dbReference type="InterPro" id="IPR000640">
    <property type="entry name" value="EFG_V-like"/>
</dbReference>
<dbReference type="InterPro" id="IPR031157">
    <property type="entry name" value="G_TR_CS"/>
</dbReference>
<dbReference type="InterPro" id="IPR027417">
    <property type="entry name" value="P-loop_NTPase"/>
</dbReference>
<dbReference type="InterPro" id="IPR020568">
    <property type="entry name" value="Ribosomal_Su5_D2-typ_SF"/>
</dbReference>
<dbReference type="InterPro" id="IPR014721">
    <property type="entry name" value="Ribsml_uS5_D2-typ_fold_subgr"/>
</dbReference>
<dbReference type="InterPro" id="IPR005225">
    <property type="entry name" value="Small_GTP-bd"/>
</dbReference>
<dbReference type="InterPro" id="IPR000795">
    <property type="entry name" value="T_Tr_GTP-bd_dom"/>
</dbReference>
<dbReference type="InterPro" id="IPR009000">
    <property type="entry name" value="Transl_B-barrel_sf"/>
</dbReference>
<dbReference type="InterPro" id="IPR004540">
    <property type="entry name" value="Transl_elong_EFG/EF2"/>
</dbReference>
<dbReference type="InterPro" id="IPR005517">
    <property type="entry name" value="Transl_elong_EFG/EF2_IV"/>
</dbReference>
<dbReference type="NCBIfam" id="TIGR00484">
    <property type="entry name" value="EF-G"/>
    <property type="match status" value="1"/>
</dbReference>
<dbReference type="NCBIfam" id="NF009381">
    <property type="entry name" value="PRK12740.1-5"/>
    <property type="match status" value="1"/>
</dbReference>
<dbReference type="NCBIfam" id="TIGR00231">
    <property type="entry name" value="small_GTP"/>
    <property type="match status" value="1"/>
</dbReference>
<dbReference type="PANTHER" id="PTHR43261:SF1">
    <property type="entry name" value="RIBOSOME-RELEASING FACTOR 2, MITOCHONDRIAL"/>
    <property type="match status" value="1"/>
</dbReference>
<dbReference type="PANTHER" id="PTHR43261">
    <property type="entry name" value="TRANSLATION ELONGATION FACTOR G-RELATED"/>
    <property type="match status" value="1"/>
</dbReference>
<dbReference type="Pfam" id="PF22042">
    <property type="entry name" value="EF-G_D2"/>
    <property type="match status" value="1"/>
</dbReference>
<dbReference type="Pfam" id="PF00679">
    <property type="entry name" value="EFG_C"/>
    <property type="match status" value="1"/>
</dbReference>
<dbReference type="Pfam" id="PF14492">
    <property type="entry name" value="EFG_III"/>
    <property type="match status" value="1"/>
</dbReference>
<dbReference type="Pfam" id="PF03764">
    <property type="entry name" value="EFG_IV"/>
    <property type="match status" value="1"/>
</dbReference>
<dbReference type="Pfam" id="PF00009">
    <property type="entry name" value="GTP_EFTU"/>
    <property type="match status" value="1"/>
</dbReference>
<dbReference type="PRINTS" id="PR00315">
    <property type="entry name" value="ELONGATNFCT"/>
</dbReference>
<dbReference type="SMART" id="SM00838">
    <property type="entry name" value="EFG_C"/>
    <property type="match status" value="1"/>
</dbReference>
<dbReference type="SMART" id="SM00889">
    <property type="entry name" value="EFG_IV"/>
    <property type="match status" value="1"/>
</dbReference>
<dbReference type="SUPFAM" id="SSF54980">
    <property type="entry name" value="EF-G C-terminal domain-like"/>
    <property type="match status" value="2"/>
</dbReference>
<dbReference type="SUPFAM" id="SSF52540">
    <property type="entry name" value="P-loop containing nucleoside triphosphate hydrolases"/>
    <property type="match status" value="1"/>
</dbReference>
<dbReference type="SUPFAM" id="SSF54211">
    <property type="entry name" value="Ribosomal protein S5 domain 2-like"/>
    <property type="match status" value="1"/>
</dbReference>
<dbReference type="SUPFAM" id="SSF50447">
    <property type="entry name" value="Translation proteins"/>
    <property type="match status" value="1"/>
</dbReference>
<dbReference type="PROSITE" id="PS00301">
    <property type="entry name" value="G_TR_1"/>
    <property type="match status" value="1"/>
</dbReference>
<dbReference type="PROSITE" id="PS51722">
    <property type="entry name" value="G_TR_2"/>
    <property type="match status" value="1"/>
</dbReference>
<gene>
    <name evidence="1" type="primary">fusA</name>
</gene>